<evidence type="ECO:0000269" key="1">
    <source>
    </source>
</evidence>
<evidence type="ECO:0000303" key="2">
    <source>
    </source>
</evidence>
<evidence type="ECO:0000305" key="3"/>
<comment type="function">
    <text evidence="1">Hemocyanins are copper-containing oxygen carriers occurring freely dissolved in the hemolymph of many mollusks and arthropods.</text>
</comment>
<comment type="subcellular location">
    <subcellularLocation>
        <location>Secreted</location>
        <location>Extracellular space</location>
    </subcellularLocation>
</comment>
<comment type="tissue specificity">
    <text>Hemolymph.</text>
</comment>
<comment type="similarity">
    <text evidence="3">Belongs to the tyrosinase family. Hemocyanin subfamily.</text>
</comment>
<protein>
    <recommendedName>
        <fullName>Hemocyanin subunit B</fullName>
    </recommendedName>
</protein>
<keyword id="KW-0186">Copper</keyword>
<keyword id="KW-0903">Direct protein sequencing</keyword>
<keyword id="KW-0561">Oxygen transport</keyword>
<keyword id="KW-0964">Secreted</keyword>
<keyword id="KW-0813">Transport</keyword>
<dbReference type="PIR" id="E60529">
    <property type="entry name" value="E60529"/>
</dbReference>
<dbReference type="GO" id="GO:0005576">
    <property type="term" value="C:extracellular region"/>
    <property type="evidence" value="ECO:0007669"/>
    <property type="project" value="UniProtKB-SubCell"/>
</dbReference>
<dbReference type="GO" id="GO:0005344">
    <property type="term" value="F:oxygen carrier activity"/>
    <property type="evidence" value="ECO:0000314"/>
    <property type="project" value="UniProtKB"/>
</dbReference>
<dbReference type="GO" id="GO:0015671">
    <property type="term" value="P:oxygen transport"/>
    <property type="evidence" value="ECO:0000304"/>
    <property type="project" value="UniProtKB"/>
</dbReference>
<feature type="chain" id="PRO_0000204260" description="Hemocyanin subunit B">
    <location>
        <begin position="1"/>
        <end position="26" status="greater than"/>
    </location>
</feature>
<feature type="non-terminal residue" evidence="2">
    <location>
        <position position="26"/>
    </location>
</feature>
<accession>P83178</accession>
<proteinExistence type="evidence at protein level"/>
<organism evidence="3">
    <name type="scientific">Carcinus maenas</name>
    <name type="common">Common shore crab</name>
    <name type="synonym">Green crab</name>
    <dbReference type="NCBI Taxonomy" id="6759"/>
    <lineage>
        <taxon>Eukaryota</taxon>
        <taxon>Metazoa</taxon>
        <taxon>Ecdysozoa</taxon>
        <taxon>Arthropoda</taxon>
        <taxon>Crustacea</taxon>
        <taxon>Multicrustacea</taxon>
        <taxon>Malacostraca</taxon>
        <taxon>Eumalacostraca</taxon>
        <taxon>Eucarida</taxon>
        <taxon>Decapoda</taxon>
        <taxon>Pleocyemata</taxon>
        <taxon>Brachyura</taxon>
        <taxon>Eubrachyura</taxon>
        <taxon>Portunoidea</taxon>
        <taxon>Carcinidae</taxon>
        <taxon>Carcinus</taxon>
    </lineage>
</organism>
<sequence length="26" mass="2794">DSPGGASDAQKQHDVNSILXKVYXEI</sequence>
<reference evidence="3" key="1">
    <citation type="journal article" date="1989" name="Comp. Biochem. Physiol.">
        <title>The relationship between N-terminal sequences and immunological characterization of crustacean hemocyanins.</title>
        <authorList>
            <person name="Neuteboom B."/>
            <person name="Sierdsema S.J."/>
            <person name="Beintema J.J."/>
        </authorList>
    </citation>
    <scope>PROTEIN SEQUENCE</scope>
    <source>
        <tissue>Hemolymph</tissue>
    </source>
</reference>
<name>HCYB_CARMA</name>